<evidence type="ECO:0000255" key="1">
    <source>
        <dbReference type="HAMAP-Rule" id="MF_00230"/>
    </source>
</evidence>
<name>COBT_GEOSL</name>
<dbReference type="EC" id="2.4.2.21" evidence="1"/>
<dbReference type="EMBL" id="AE017180">
    <property type="protein sequence ID" value="AAR36401.1"/>
    <property type="molecule type" value="Genomic_DNA"/>
</dbReference>
<dbReference type="RefSeq" id="NP_954051.1">
    <property type="nucleotide sequence ID" value="NC_002939.5"/>
</dbReference>
<dbReference type="RefSeq" id="WP_010943639.1">
    <property type="nucleotide sequence ID" value="NC_002939.5"/>
</dbReference>
<dbReference type="SMR" id="Q748J3"/>
<dbReference type="FunCoup" id="Q748J3">
    <property type="interactions" value="105"/>
</dbReference>
<dbReference type="STRING" id="243231.GSU3009"/>
<dbReference type="EnsemblBacteria" id="AAR36401">
    <property type="protein sequence ID" value="AAR36401"/>
    <property type="gene ID" value="GSU3009"/>
</dbReference>
<dbReference type="KEGG" id="gsu:GSU3009"/>
<dbReference type="PATRIC" id="fig|243231.5.peg.3037"/>
<dbReference type="eggNOG" id="COG2038">
    <property type="taxonomic scope" value="Bacteria"/>
</dbReference>
<dbReference type="HOGENOM" id="CLU_002982_0_0_7"/>
<dbReference type="InParanoid" id="Q748J3"/>
<dbReference type="OrthoDB" id="9781491at2"/>
<dbReference type="UniPathway" id="UPA00061">
    <property type="reaction ID" value="UER00516"/>
</dbReference>
<dbReference type="Proteomes" id="UP000000577">
    <property type="component" value="Chromosome"/>
</dbReference>
<dbReference type="GO" id="GO:0008939">
    <property type="term" value="F:nicotinate-nucleotide-dimethylbenzimidazole phosphoribosyltransferase activity"/>
    <property type="evidence" value="ECO:0007669"/>
    <property type="project" value="UniProtKB-UniRule"/>
</dbReference>
<dbReference type="GO" id="GO:0009236">
    <property type="term" value="P:cobalamin biosynthetic process"/>
    <property type="evidence" value="ECO:0007669"/>
    <property type="project" value="UniProtKB-KW"/>
</dbReference>
<dbReference type="CDD" id="cd02439">
    <property type="entry name" value="DMB-PRT_CobT"/>
    <property type="match status" value="1"/>
</dbReference>
<dbReference type="FunFam" id="3.40.50.10210:FF:000001">
    <property type="entry name" value="Nicotinate-nucleotide--dimethylbenzimidazole phosphoribosyltransferase"/>
    <property type="match status" value="1"/>
</dbReference>
<dbReference type="Gene3D" id="1.10.1610.10">
    <property type="match status" value="1"/>
</dbReference>
<dbReference type="Gene3D" id="3.40.50.10210">
    <property type="match status" value="1"/>
</dbReference>
<dbReference type="HAMAP" id="MF_00230">
    <property type="entry name" value="CobT"/>
    <property type="match status" value="1"/>
</dbReference>
<dbReference type="InterPro" id="IPR003200">
    <property type="entry name" value="Nict_dMeBzImd_PRibTrfase"/>
</dbReference>
<dbReference type="InterPro" id="IPR017846">
    <property type="entry name" value="Nict_dMeBzImd_PRibTrfase_bact"/>
</dbReference>
<dbReference type="InterPro" id="IPR023195">
    <property type="entry name" value="Nict_dMeBzImd_PRibTrfase_N"/>
</dbReference>
<dbReference type="InterPro" id="IPR036087">
    <property type="entry name" value="Nict_dMeBzImd_PRibTrfase_sf"/>
</dbReference>
<dbReference type="NCBIfam" id="TIGR03160">
    <property type="entry name" value="cobT_DBIPRT"/>
    <property type="match status" value="1"/>
</dbReference>
<dbReference type="NCBIfam" id="NF000996">
    <property type="entry name" value="PRK00105.1"/>
    <property type="match status" value="1"/>
</dbReference>
<dbReference type="PANTHER" id="PTHR43463">
    <property type="entry name" value="NICOTINATE-NUCLEOTIDE--DIMETHYLBENZIMIDAZOLE PHOSPHORIBOSYLTRANSFERASE"/>
    <property type="match status" value="1"/>
</dbReference>
<dbReference type="PANTHER" id="PTHR43463:SF1">
    <property type="entry name" value="NICOTINATE-NUCLEOTIDE--DIMETHYLBENZIMIDAZOLE PHOSPHORIBOSYLTRANSFERASE"/>
    <property type="match status" value="1"/>
</dbReference>
<dbReference type="Pfam" id="PF02277">
    <property type="entry name" value="DBI_PRT"/>
    <property type="match status" value="1"/>
</dbReference>
<dbReference type="SUPFAM" id="SSF52733">
    <property type="entry name" value="Nicotinate mononucleotide:5,6-dimethylbenzimidazole phosphoribosyltransferase (CobT)"/>
    <property type="match status" value="1"/>
</dbReference>
<comment type="function">
    <text evidence="1">Catalyzes the synthesis of alpha-ribazole-5'-phosphate from nicotinate mononucleotide (NAMN) and 5,6-dimethylbenzimidazole (DMB).</text>
</comment>
<comment type="catalytic activity">
    <reaction evidence="1">
        <text>5,6-dimethylbenzimidazole + nicotinate beta-D-ribonucleotide = alpha-ribazole 5'-phosphate + nicotinate + H(+)</text>
        <dbReference type="Rhea" id="RHEA:11196"/>
        <dbReference type="ChEBI" id="CHEBI:15378"/>
        <dbReference type="ChEBI" id="CHEBI:15890"/>
        <dbReference type="ChEBI" id="CHEBI:32544"/>
        <dbReference type="ChEBI" id="CHEBI:57502"/>
        <dbReference type="ChEBI" id="CHEBI:57918"/>
        <dbReference type="EC" id="2.4.2.21"/>
    </reaction>
</comment>
<comment type="pathway">
    <text evidence="1">Nucleoside biosynthesis; alpha-ribazole biosynthesis; alpha-ribazole from 5,6-dimethylbenzimidazole: step 1/2.</text>
</comment>
<comment type="similarity">
    <text evidence="1">Belongs to the CobT family.</text>
</comment>
<keyword id="KW-0169">Cobalamin biosynthesis</keyword>
<keyword id="KW-0328">Glycosyltransferase</keyword>
<keyword id="KW-1185">Reference proteome</keyword>
<keyword id="KW-0808">Transferase</keyword>
<proteinExistence type="inferred from homology"/>
<reference key="1">
    <citation type="journal article" date="2003" name="Science">
        <title>Genome of Geobacter sulfurreducens: metal reduction in subsurface environments.</title>
        <authorList>
            <person name="Methe B.A."/>
            <person name="Nelson K.E."/>
            <person name="Eisen J.A."/>
            <person name="Paulsen I.T."/>
            <person name="Nelson W.C."/>
            <person name="Heidelberg J.F."/>
            <person name="Wu D."/>
            <person name="Wu M."/>
            <person name="Ward N.L."/>
            <person name="Beanan M.J."/>
            <person name="Dodson R.J."/>
            <person name="Madupu R."/>
            <person name="Brinkac L.M."/>
            <person name="Daugherty S.C."/>
            <person name="DeBoy R.T."/>
            <person name="Durkin A.S."/>
            <person name="Gwinn M.L."/>
            <person name="Kolonay J.F."/>
            <person name="Sullivan S.A."/>
            <person name="Haft D.H."/>
            <person name="Selengut J."/>
            <person name="Davidsen T.M."/>
            <person name="Zafar N."/>
            <person name="White O."/>
            <person name="Tran B."/>
            <person name="Romero C."/>
            <person name="Forberger H.A."/>
            <person name="Weidman J.F."/>
            <person name="Khouri H.M."/>
            <person name="Feldblyum T.V."/>
            <person name="Utterback T.R."/>
            <person name="Van Aken S.E."/>
            <person name="Lovley D.R."/>
            <person name="Fraser C.M."/>
        </authorList>
    </citation>
    <scope>NUCLEOTIDE SEQUENCE [LARGE SCALE GENOMIC DNA]</scope>
    <source>
        <strain>ATCC 51573 / DSM 12127 / PCA</strain>
    </source>
</reference>
<sequence length="352" mass="36618">MTLLTEALSKICPVDAELMAQAQARLDNKTKPIGSLGRLEEFARRMVAITGSVAPDTKKKVVFTFAGDHGVTDEGVSAFPREVTPQMVYNFLRGGAGINVLARHVGAQVRVVDIGVDHDFGDTPGLIVRKVARGTRNFARGPAMTREEAVAALEVGIDLANEAKREGIALVGTGEMGIGNTTPSAAIIAAFSGLPVPAVTHRGTGIGDEALANKVRVIEAGLALNQPDPKDPIDVLAKVGGLEIAGIAGLILGCAANRLPVVVDGFISTAGALVACELNPHVRDYLFAAHQSVEVGHRVMLDRIGAAPILDLQLRLGEGTGGALAMGLIEAGVRILTEMATFEEAGVAEGDY</sequence>
<feature type="chain" id="PRO_1000021598" description="Nicotinate-nucleotide--dimethylbenzimidazole phosphoribosyltransferase">
    <location>
        <begin position="1"/>
        <end position="352"/>
    </location>
</feature>
<feature type="active site" description="Proton acceptor" evidence="1">
    <location>
        <position position="318"/>
    </location>
</feature>
<gene>
    <name evidence="1" type="primary">cobT</name>
    <name type="ordered locus">GSU3009</name>
</gene>
<accession>Q748J3</accession>
<organism>
    <name type="scientific">Geobacter sulfurreducens (strain ATCC 51573 / DSM 12127 / PCA)</name>
    <dbReference type="NCBI Taxonomy" id="243231"/>
    <lineage>
        <taxon>Bacteria</taxon>
        <taxon>Pseudomonadati</taxon>
        <taxon>Thermodesulfobacteriota</taxon>
        <taxon>Desulfuromonadia</taxon>
        <taxon>Geobacterales</taxon>
        <taxon>Geobacteraceae</taxon>
        <taxon>Geobacter</taxon>
    </lineage>
</organism>
<protein>
    <recommendedName>
        <fullName evidence="1">Nicotinate-nucleotide--dimethylbenzimidazole phosphoribosyltransferase</fullName>
        <shortName evidence="1">NN:DBI PRT</shortName>
        <ecNumber evidence="1">2.4.2.21</ecNumber>
    </recommendedName>
    <alternativeName>
        <fullName evidence="1">N(1)-alpha-phosphoribosyltransferase</fullName>
    </alternativeName>
</protein>